<proteinExistence type="inferred from homology"/>
<organism>
    <name type="scientific">Chlamydia pneumoniae</name>
    <name type="common">Chlamydophila pneumoniae</name>
    <dbReference type="NCBI Taxonomy" id="83558"/>
    <lineage>
        <taxon>Bacteria</taxon>
        <taxon>Pseudomonadati</taxon>
        <taxon>Chlamydiota</taxon>
        <taxon>Chlamydiia</taxon>
        <taxon>Chlamydiales</taxon>
        <taxon>Chlamydiaceae</taxon>
        <taxon>Chlamydia/Chlamydophila group</taxon>
        <taxon>Chlamydia</taxon>
    </lineage>
</organism>
<feature type="chain" id="PRO_0000123130" description="Small ribosomal subunit protein uS11">
    <location>
        <begin position="1"/>
        <end position="133"/>
    </location>
</feature>
<comment type="function">
    <text evidence="1">Located on the platform of the 30S subunit, it bridges several disparate RNA helices of the 16S rRNA. Forms part of the Shine-Dalgarno cleft in the 70S ribosome.</text>
</comment>
<comment type="subunit">
    <text evidence="1">Part of the 30S ribosomal subunit. Interacts with proteins S7 and S18. Binds to IF-3.</text>
</comment>
<comment type="similarity">
    <text evidence="1">Belongs to the universal ribosomal protein uS11 family.</text>
</comment>
<accession>Q9Z7S7</accession>
<accession>Q9JQH5</accession>
<dbReference type="EMBL" id="AE001363">
    <property type="protein sequence ID" value="AAD18766.1"/>
    <property type="molecule type" value="Genomic_DNA"/>
</dbReference>
<dbReference type="EMBL" id="AE002161">
    <property type="protein sequence ID" value="AAF38003.1"/>
    <property type="molecule type" value="Genomic_DNA"/>
</dbReference>
<dbReference type="EMBL" id="BA000008">
    <property type="protein sequence ID" value="BAA98834.1"/>
    <property type="molecule type" value="Genomic_DNA"/>
</dbReference>
<dbReference type="EMBL" id="AE009440">
    <property type="protein sequence ID" value="AAP98582.1"/>
    <property type="molecule type" value="Genomic_DNA"/>
</dbReference>
<dbReference type="PIR" id="E72053">
    <property type="entry name" value="E72053"/>
</dbReference>
<dbReference type="PIR" id="H86568">
    <property type="entry name" value="H86568"/>
</dbReference>
<dbReference type="RefSeq" id="NP_224823.1">
    <property type="nucleotide sequence ID" value="NC_000922.1"/>
</dbReference>
<dbReference type="RefSeq" id="WP_010883265.1">
    <property type="nucleotide sequence ID" value="NZ_LN847257.1"/>
</dbReference>
<dbReference type="SMR" id="Q9Z7S7"/>
<dbReference type="STRING" id="406984.CPK_ORF00027"/>
<dbReference type="GeneID" id="45050677"/>
<dbReference type="KEGG" id="cpa:CP_0120"/>
<dbReference type="KEGG" id="cpj:rs11"/>
<dbReference type="KEGG" id="cpn:CPn_0627"/>
<dbReference type="KEGG" id="cpt:CpB0653"/>
<dbReference type="PATRIC" id="fig|115713.3.peg.697"/>
<dbReference type="eggNOG" id="COG0100">
    <property type="taxonomic scope" value="Bacteria"/>
</dbReference>
<dbReference type="HOGENOM" id="CLU_072439_5_0_0"/>
<dbReference type="OMA" id="KWGVAHI"/>
<dbReference type="OrthoDB" id="9806415at2"/>
<dbReference type="Proteomes" id="UP000000583">
    <property type="component" value="Chromosome"/>
</dbReference>
<dbReference type="Proteomes" id="UP000000801">
    <property type="component" value="Chromosome"/>
</dbReference>
<dbReference type="GO" id="GO:1990904">
    <property type="term" value="C:ribonucleoprotein complex"/>
    <property type="evidence" value="ECO:0007669"/>
    <property type="project" value="UniProtKB-KW"/>
</dbReference>
<dbReference type="GO" id="GO:0005840">
    <property type="term" value="C:ribosome"/>
    <property type="evidence" value="ECO:0007669"/>
    <property type="project" value="UniProtKB-KW"/>
</dbReference>
<dbReference type="GO" id="GO:0019843">
    <property type="term" value="F:rRNA binding"/>
    <property type="evidence" value="ECO:0007669"/>
    <property type="project" value="UniProtKB-UniRule"/>
</dbReference>
<dbReference type="GO" id="GO:0003735">
    <property type="term" value="F:structural constituent of ribosome"/>
    <property type="evidence" value="ECO:0007669"/>
    <property type="project" value="InterPro"/>
</dbReference>
<dbReference type="GO" id="GO:0006412">
    <property type="term" value="P:translation"/>
    <property type="evidence" value="ECO:0007669"/>
    <property type="project" value="UniProtKB-UniRule"/>
</dbReference>
<dbReference type="FunFam" id="3.30.420.80:FF:000004">
    <property type="entry name" value="30S ribosomal protein S11"/>
    <property type="match status" value="1"/>
</dbReference>
<dbReference type="Gene3D" id="3.30.420.80">
    <property type="entry name" value="Ribosomal protein S11"/>
    <property type="match status" value="1"/>
</dbReference>
<dbReference type="HAMAP" id="MF_01310">
    <property type="entry name" value="Ribosomal_uS11"/>
    <property type="match status" value="1"/>
</dbReference>
<dbReference type="InterPro" id="IPR001971">
    <property type="entry name" value="Ribosomal_uS11"/>
</dbReference>
<dbReference type="InterPro" id="IPR019981">
    <property type="entry name" value="Ribosomal_uS11_bac-type"/>
</dbReference>
<dbReference type="InterPro" id="IPR018102">
    <property type="entry name" value="Ribosomal_uS11_CS"/>
</dbReference>
<dbReference type="InterPro" id="IPR036967">
    <property type="entry name" value="Ribosomal_uS11_sf"/>
</dbReference>
<dbReference type="NCBIfam" id="NF003698">
    <property type="entry name" value="PRK05309.1"/>
    <property type="match status" value="1"/>
</dbReference>
<dbReference type="NCBIfam" id="TIGR03632">
    <property type="entry name" value="uS11_bact"/>
    <property type="match status" value="1"/>
</dbReference>
<dbReference type="PANTHER" id="PTHR11759">
    <property type="entry name" value="40S RIBOSOMAL PROTEIN S14/30S RIBOSOMAL PROTEIN S11"/>
    <property type="match status" value="1"/>
</dbReference>
<dbReference type="Pfam" id="PF00411">
    <property type="entry name" value="Ribosomal_S11"/>
    <property type="match status" value="1"/>
</dbReference>
<dbReference type="PIRSF" id="PIRSF002131">
    <property type="entry name" value="Ribosomal_S11"/>
    <property type="match status" value="1"/>
</dbReference>
<dbReference type="SUPFAM" id="SSF53137">
    <property type="entry name" value="Translational machinery components"/>
    <property type="match status" value="1"/>
</dbReference>
<dbReference type="PROSITE" id="PS00054">
    <property type="entry name" value="RIBOSOMAL_S11"/>
    <property type="match status" value="1"/>
</dbReference>
<keyword id="KW-0687">Ribonucleoprotein</keyword>
<keyword id="KW-0689">Ribosomal protein</keyword>
<keyword id="KW-0694">RNA-binding</keyword>
<keyword id="KW-0699">rRNA-binding</keyword>
<name>RS11_CHLPN</name>
<reference key="1">
    <citation type="journal article" date="1999" name="Nat. Genet.">
        <title>Comparative genomes of Chlamydia pneumoniae and C. trachomatis.</title>
        <authorList>
            <person name="Kalman S."/>
            <person name="Mitchell W.P."/>
            <person name="Marathe R."/>
            <person name="Lammel C.J."/>
            <person name="Fan J."/>
            <person name="Hyman R.W."/>
            <person name="Olinger L."/>
            <person name="Grimwood J."/>
            <person name="Davis R.W."/>
            <person name="Stephens R.S."/>
        </authorList>
    </citation>
    <scope>NUCLEOTIDE SEQUENCE [LARGE SCALE GENOMIC DNA]</scope>
    <source>
        <strain>CWL029</strain>
    </source>
</reference>
<reference key="2">
    <citation type="journal article" date="2000" name="Nucleic Acids Res.">
        <title>Genome sequences of Chlamydia trachomatis MoPn and Chlamydia pneumoniae AR39.</title>
        <authorList>
            <person name="Read T.D."/>
            <person name="Brunham R.C."/>
            <person name="Shen C."/>
            <person name="Gill S.R."/>
            <person name="Heidelberg J.F."/>
            <person name="White O."/>
            <person name="Hickey E.K."/>
            <person name="Peterson J.D."/>
            <person name="Utterback T.R."/>
            <person name="Berry K.J."/>
            <person name="Bass S."/>
            <person name="Linher K.D."/>
            <person name="Weidman J.F."/>
            <person name="Khouri H.M."/>
            <person name="Craven B."/>
            <person name="Bowman C."/>
            <person name="Dodson R.J."/>
            <person name="Gwinn M.L."/>
            <person name="Nelson W.C."/>
            <person name="DeBoy R.T."/>
            <person name="Kolonay J.F."/>
            <person name="McClarty G."/>
            <person name="Salzberg S.L."/>
            <person name="Eisen J.A."/>
            <person name="Fraser C.M."/>
        </authorList>
    </citation>
    <scope>NUCLEOTIDE SEQUENCE [LARGE SCALE GENOMIC DNA]</scope>
    <source>
        <strain>AR39</strain>
    </source>
</reference>
<reference key="3">
    <citation type="journal article" date="2000" name="Nucleic Acids Res.">
        <title>Comparison of whole genome sequences of Chlamydia pneumoniae J138 from Japan and CWL029 from USA.</title>
        <authorList>
            <person name="Shirai M."/>
            <person name="Hirakawa H."/>
            <person name="Kimoto M."/>
            <person name="Tabuchi M."/>
            <person name="Kishi F."/>
            <person name="Ouchi K."/>
            <person name="Shiba T."/>
            <person name="Ishii K."/>
            <person name="Hattori M."/>
            <person name="Kuhara S."/>
            <person name="Nakazawa T."/>
        </authorList>
    </citation>
    <scope>NUCLEOTIDE SEQUENCE [LARGE SCALE GENOMIC DNA]</scope>
    <source>
        <strain>J138</strain>
    </source>
</reference>
<reference key="4">
    <citation type="submission" date="2002-05" db="EMBL/GenBank/DDBJ databases">
        <title>The genome sequence of Chlamydia pneumoniae TW183 and comparison with other Chlamydia strains based on whole genome sequence analysis.</title>
        <authorList>
            <person name="Geng M.M."/>
            <person name="Schuhmacher A."/>
            <person name="Muehldorfer I."/>
            <person name="Bensch K.W."/>
            <person name="Schaefer K.P."/>
            <person name="Schneider S."/>
            <person name="Pohl T."/>
            <person name="Essig A."/>
            <person name="Marre R."/>
            <person name="Melchers K."/>
        </authorList>
    </citation>
    <scope>NUCLEOTIDE SEQUENCE [LARGE SCALE GENOMIC DNA]</scope>
    <source>
        <strain>TW-183</strain>
    </source>
</reference>
<protein>
    <recommendedName>
        <fullName evidence="1">Small ribosomal subunit protein uS11</fullName>
    </recommendedName>
    <alternativeName>
        <fullName evidence="2">30S ribosomal protein S11</fullName>
    </alternativeName>
</protein>
<sequence>MVKNQAQAKKSVKRKQLKNIPSGVVHVKATFNNTIVSITDPAGNVISWASAGKVGYSGSRKSSAFAATVAAQDAAKTAMNSGLKEVEVCLKGTGAGRESAVRALISAGLVVSVIRDETPVPHNGCRPRKRRRV</sequence>
<evidence type="ECO:0000255" key="1">
    <source>
        <dbReference type="HAMAP-Rule" id="MF_01310"/>
    </source>
</evidence>
<evidence type="ECO:0000305" key="2"/>
<gene>
    <name evidence="1" type="primary">rpsK</name>
    <name type="synonym">rs11</name>
    <name type="ordered locus">CPn_0627</name>
    <name type="ordered locus">CP_0120</name>
    <name type="ordered locus">CpB0653</name>
</gene>